<sequence length="124" mass="13424">MNNLLLVALGGSIGAVFRYLISIFMIQVFGSSFPFGTLLVNVLGSFLMGVIYALGQMSHISPELKALIGVGLLGALTTFSTFSNETLLLMQEGDWLKAALNVVLNLSLCLFMVYLGQQLVFSRI</sequence>
<dbReference type="EMBL" id="CP000446">
    <property type="protein sequence ID" value="ABI39039.1"/>
    <property type="molecule type" value="Genomic_DNA"/>
</dbReference>
<dbReference type="RefSeq" id="WP_011622732.1">
    <property type="nucleotide sequence ID" value="NC_008321.1"/>
</dbReference>
<dbReference type="SMR" id="Q0HIS8"/>
<dbReference type="GeneID" id="94727997"/>
<dbReference type="KEGG" id="she:Shewmr4_1966"/>
<dbReference type="HOGENOM" id="CLU_114342_3_0_6"/>
<dbReference type="GO" id="GO:0005886">
    <property type="term" value="C:plasma membrane"/>
    <property type="evidence" value="ECO:0007669"/>
    <property type="project" value="UniProtKB-SubCell"/>
</dbReference>
<dbReference type="GO" id="GO:0062054">
    <property type="term" value="F:fluoride channel activity"/>
    <property type="evidence" value="ECO:0007669"/>
    <property type="project" value="UniProtKB-UniRule"/>
</dbReference>
<dbReference type="GO" id="GO:0046872">
    <property type="term" value="F:metal ion binding"/>
    <property type="evidence" value="ECO:0007669"/>
    <property type="project" value="UniProtKB-KW"/>
</dbReference>
<dbReference type="GO" id="GO:0140114">
    <property type="term" value="P:cellular detoxification of fluoride"/>
    <property type="evidence" value="ECO:0007669"/>
    <property type="project" value="UniProtKB-UniRule"/>
</dbReference>
<dbReference type="HAMAP" id="MF_00454">
    <property type="entry name" value="FluC"/>
    <property type="match status" value="1"/>
</dbReference>
<dbReference type="InterPro" id="IPR003691">
    <property type="entry name" value="FluC"/>
</dbReference>
<dbReference type="NCBIfam" id="TIGR00494">
    <property type="entry name" value="crcB"/>
    <property type="match status" value="1"/>
</dbReference>
<dbReference type="PANTHER" id="PTHR28259">
    <property type="entry name" value="FLUORIDE EXPORT PROTEIN 1-RELATED"/>
    <property type="match status" value="1"/>
</dbReference>
<dbReference type="PANTHER" id="PTHR28259:SF1">
    <property type="entry name" value="FLUORIDE EXPORT PROTEIN 1-RELATED"/>
    <property type="match status" value="1"/>
</dbReference>
<dbReference type="Pfam" id="PF02537">
    <property type="entry name" value="CRCB"/>
    <property type="match status" value="1"/>
</dbReference>
<feature type="chain" id="PRO_1000026420" description="Fluoride-specific ion channel FluC">
    <location>
        <begin position="1"/>
        <end position="124"/>
    </location>
</feature>
<feature type="transmembrane region" description="Helical" evidence="1">
    <location>
        <begin position="4"/>
        <end position="24"/>
    </location>
</feature>
<feature type="transmembrane region" description="Helical" evidence="1">
    <location>
        <begin position="35"/>
        <end position="55"/>
    </location>
</feature>
<feature type="transmembrane region" description="Helical" evidence="1">
    <location>
        <begin position="60"/>
        <end position="80"/>
    </location>
</feature>
<feature type="transmembrane region" description="Helical" evidence="1">
    <location>
        <begin position="102"/>
        <end position="122"/>
    </location>
</feature>
<feature type="binding site" evidence="1">
    <location>
        <position position="74"/>
    </location>
    <ligand>
        <name>Na(+)</name>
        <dbReference type="ChEBI" id="CHEBI:29101"/>
        <note>structural</note>
    </ligand>
</feature>
<feature type="binding site" evidence="1">
    <location>
        <position position="77"/>
    </location>
    <ligand>
        <name>Na(+)</name>
        <dbReference type="ChEBI" id="CHEBI:29101"/>
        <note>structural</note>
    </ligand>
</feature>
<organism>
    <name type="scientific">Shewanella sp. (strain MR-4)</name>
    <dbReference type="NCBI Taxonomy" id="60480"/>
    <lineage>
        <taxon>Bacteria</taxon>
        <taxon>Pseudomonadati</taxon>
        <taxon>Pseudomonadota</taxon>
        <taxon>Gammaproteobacteria</taxon>
        <taxon>Alteromonadales</taxon>
        <taxon>Shewanellaceae</taxon>
        <taxon>Shewanella</taxon>
    </lineage>
</organism>
<name>FLUC_SHESM</name>
<keyword id="KW-0997">Cell inner membrane</keyword>
<keyword id="KW-1003">Cell membrane</keyword>
<keyword id="KW-0407">Ion channel</keyword>
<keyword id="KW-0406">Ion transport</keyword>
<keyword id="KW-0472">Membrane</keyword>
<keyword id="KW-0479">Metal-binding</keyword>
<keyword id="KW-0915">Sodium</keyword>
<keyword id="KW-0812">Transmembrane</keyword>
<keyword id="KW-1133">Transmembrane helix</keyword>
<keyword id="KW-0813">Transport</keyword>
<comment type="function">
    <text evidence="1">Fluoride-specific ion channel. Important for reducing fluoride concentration in the cell, thus reducing its toxicity.</text>
</comment>
<comment type="catalytic activity">
    <reaction evidence="1">
        <text>fluoride(in) = fluoride(out)</text>
        <dbReference type="Rhea" id="RHEA:76159"/>
        <dbReference type="ChEBI" id="CHEBI:17051"/>
    </reaction>
    <physiologicalReaction direction="left-to-right" evidence="1">
        <dbReference type="Rhea" id="RHEA:76160"/>
    </physiologicalReaction>
</comment>
<comment type="activity regulation">
    <text evidence="1">Na(+) is not transported, but it plays an essential structural role and its presence is essential for fluoride channel function.</text>
</comment>
<comment type="subcellular location">
    <subcellularLocation>
        <location evidence="1">Cell inner membrane</location>
        <topology evidence="1">Multi-pass membrane protein</topology>
    </subcellularLocation>
</comment>
<comment type="similarity">
    <text evidence="1">Belongs to the fluoride channel Fluc/FEX (TC 1.A.43) family.</text>
</comment>
<evidence type="ECO:0000255" key="1">
    <source>
        <dbReference type="HAMAP-Rule" id="MF_00454"/>
    </source>
</evidence>
<proteinExistence type="inferred from homology"/>
<reference key="1">
    <citation type="submission" date="2006-08" db="EMBL/GenBank/DDBJ databases">
        <title>Complete sequence of Shewanella sp. MR-4.</title>
        <authorList>
            <consortium name="US DOE Joint Genome Institute"/>
            <person name="Copeland A."/>
            <person name="Lucas S."/>
            <person name="Lapidus A."/>
            <person name="Barry K."/>
            <person name="Detter J.C."/>
            <person name="Glavina del Rio T."/>
            <person name="Hammon N."/>
            <person name="Israni S."/>
            <person name="Dalin E."/>
            <person name="Tice H."/>
            <person name="Pitluck S."/>
            <person name="Kiss H."/>
            <person name="Brettin T."/>
            <person name="Bruce D."/>
            <person name="Han C."/>
            <person name="Tapia R."/>
            <person name="Gilna P."/>
            <person name="Schmutz J."/>
            <person name="Larimer F."/>
            <person name="Land M."/>
            <person name="Hauser L."/>
            <person name="Kyrpides N."/>
            <person name="Mikhailova N."/>
            <person name="Nealson K."/>
            <person name="Konstantinidis K."/>
            <person name="Klappenbach J."/>
            <person name="Tiedje J."/>
            <person name="Richardson P."/>
        </authorList>
    </citation>
    <scope>NUCLEOTIDE SEQUENCE [LARGE SCALE GENOMIC DNA]</scope>
    <source>
        <strain>MR-4</strain>
    </source>
</reference>
<gene>
    <name evidence="1" type="primary">fluC</name>
    <name evidence="1" type="synonym">crcB</name>
    <name type="ordered locus">Shewmr4_1966</name>
</gene>
<accession>Q0HIS8</accession>
<protein>
    <recommendedName>
        <fullName evidence="1">Fluoride-specific ion channel FluC</fullName>
    </recommendedName>
</protein>